<evidence type="ECO:0000255" key="1">
    <source>
        <dbReference type="HAMAP-Rule" id="MF_00611"/>
    </source>
</evidence>
<sequence>MSIRIIPQDELGSSEKRTADMIPPLLFPRLKNVYNRRAERLRELAENNPLGDYLRFAALIAHAQEVVLYDHPLEMDLTARIKEANDQGKPPLDIHVLPRDKHWQKLLHSLIAELKPEMSGPALAVIENLEKASEQELEQMASALFASDFASVSSDKAPFIWAALSLYWAQMASLIPGKARAEYGEARQYCPVCGSMPVSSMVQIGTTQGLRYLHCNLCETEWHVVRVKCSNCEQSRDLHYWSLENEQAAVKAESCGDCGTYLKILYQEKDPKVEAVADDLASLVLDARMEQEGFARSSINPFLFPGEGE</sequence>
<organism>
    <name type="scientific">Salmonella agona (strain SL483)</name>
    <dbReference type="NCBI Taxonomy" id="454166"/>
    <lineage>
        <taxon>Bacteria</taxon>
        <taxon>Pseudomonadati</taxon>
        <taxon>Pseudomonadota</taxon>
        <taxon>Gammaproteobacteria</taxon>
        <taxon>Enterobacterales</taxon>
        <taxon>Enterobacteriaceae</taxon>
        <taxon>Salmonella</taxon>
    </lineage>
</organism>
<keyword id="KW-0963">Cytoplasm</keyword>
<gene>
    <name evidence="1" type="primary">fdhE</name>
    <name type="ordered locus">SeAg_B4269</name>
</gene>
<accession>B5F008</accession>
<dbReference type="EMBL" id="CP001138">
    <property type="protein sequence ID" value="ACH50695.1"/>
    <property type="molecule type" value="Genomic_DNA"/>
</dbReference>
<dbReference type="RefSeq" id="WP_000027730.1">
    <property type="nucleotide sequence ID" value="NC_011149.1"/>
</dbReference>
<dbReference type="SMR" id="B5F008"/>
<dbReference type="KEGG" id="sea:SeAg_B4269"/>
<dbReference type="HOGENOM" id="CLU_055275_0_0_6"/>
<dbReference type="Proteomes" id="UP000008819">
    <property type="component" value="Chromosome"/>
</dbReference>
<dbReference type="GO" id="GO:0005829">
    <property type="term" value="C:cytosol"/>
    <property type="evidence" value="ECO:0007669"/>
    <property type="project" value="TreeGrafter"/>
</dbReference>
<dbReference type="GO" id="GO:0008199">
    <property type="term" value="F:ferric iron binding"/>
    <property type="evidence" value="ECO:0007669"/>
    <property type="project" value="TreeGrafter"/>
</dbReference>
<dbReference type="GO" id="GO:0051604">
    <property type="term" value="P:protein maturation"/>
    <property type="evidence" value="ECO:0007669"/>
    <property type="project" value="TreeGrafter"/>
</dbReference>
<dbReference type="CDD" id="cd16341">
    <property type="entry name" value="FdhE"/>
    <property type="match status" value="1"/>
</dbReference>
<dbReference type="FunFam" id="3.90.1670.10:FF:000001">
    <property type="entry name" value="Protein FdhE"/>
    <property type="match status" value="1"/>
</dbReference>
<dbReference type="Gene3D" id="3.90.1670.10">
    <property type="entry name" value="FdhE-like domain"/>
    <property type="match status" value="1"/>
</dbReference>
<dbReference type="HAMAP" id="MF_00611">
    <property type="entry name" value="FdeH"/>
    <property type="match status" value="1"/>
</dbReference>
<dbReference type="InterPro" id="IPR024064">
    <property type="entry name" value="FdhE-like_sf"/>
</dbReference>
<dbReference type="InterPro" id="IPR056796">
    <property type="entry name" value="FdhE_C"/>
</dbReference>
<dbReference type="InterPro" id="IPR056797">
    <property type="entry name" value="FdhE_central"/>
</dbReference>
<dbReference type="InterPro" id="IPR056774">
    <property type="entry name" value="FdhE_N"/>
</dbReference>
<dbReference type="InterPro" id="IPR006452">
    <property type="entry name" value="Formate_DH_accessory"/>
</dbReference>
<dbReference type="NCBIfam" id="TIGR01562">
    <property type="entry name" value="FdhE"/>
    <property type="match status" value="1"/>
</dbReference>
<dbReference type="NCBIfam" id="NF002925">
    <property type="entry name" value="PRK03564.1"/>
    <property type="match status" value="1"/>
</dbReference>
<dbReference type="PANTHER" id="PTHR37689">
    <property type="entry name" value="PROTEIN FDHE"/>
    <property type="match status" value="1"/>
</dbReference>
<dbReference type="PANTHER" id="PTHR37689:SF1">
    <property type="entry name" value="PROTEIN FDHE"/>
    <property type="match status" value="1"/>
</dbReference>
<dbReference type="Pfam" id="PF24860">
    <property type="entry name" value="FdhE_C"/>
    <property type="match status" value="1"/>
</dbReference>
<dbReference type="Pfam" id="PF24859">
    <property type="entry name" value="FdhE_central"/>
    <property type="match status" value="1"/>
</dbReference>
<dbReference type="Pfam" id="PF04216">
    <property type="entry name" value="FdhE_N"/>
    <property type="match status" value="1"/>
</dbReference>
<dbReference type="PIRSF" id="PIRSF018296">
    <property type="entry name" value="Format_dh_formtn"/>
    <property type="match status" value="1"/>
</dbReference>
<dbReference type="SUPFAM" id="SSF144020">
    <property type="entry name" value="FdhE-like"/>
    <property type="match status" value="1"/>
</dbReference>
<reference key="1">
    <citation type="journal article" date="2011" name="J. Bacteriol.">
        <title>Comparative genomics of 28 Salmonella enterica isolates: evidence for CRISPR-mediated adaptive sublineage evolution.</title>
        <authorList>
            <person name="Fricke W.F."/>
            <person name="Mammel M.K."/>
            <person name="McDermott P.F."/>
            <person name="Tartera C."/>
            <person name="White D.G."/>
            <person name="Leclerc J.E."/>
            <person name="Ravel J."/>
            <person name="Cebula T.A."/>
        </authorList>
    </citation>
    <scope>NUCLEOTIDE SEQUENCE [LARGE SCALE GENOMIC DNA]</scope>
    <source>
        <strain>SL483</strain>
    </source>
</reference>
<protein>
    <recommendedName>
        <fullName evidence="1">Protein FdhE</fullName>
    </recommendedName>
</protein>
<feature type="chain" id="PRO_1000130366" description="Protein FdhE">
    <location>
        <begin position="1"/>
        <end position="309"/>
    </location>
</feature>
<comment type="function">
    <text evidence="1">Necessary for formate dehydrogenase activity.</text>
</comment>
<comment type="subcellular location">
    <subcellularLocation>
        <location evidence="1">Cytoplasm</location>
    </subcellularLocation>
</comment>
<comment type="similarity">
    <text evidence="1">Belongs to the FdhE family.</text>
</comment>
<proteinExistence type="inferred from homology"/>
<name>FDHE_SALA4</name>